<proteinExistence type="inferred from homology"/>
<gene>
    <name type="ORF">UREG_07217</name>
</gene>
<feature type="chain" id="PRO_0000406744" description="Pentafunctional AROM polypeptide">
    <location>
        <begin position="1"/>
        <end position="1580"/>
    </location>
</feature>
<feature type="region of interest" description="3-dehydroquinate synthase">
    <location>
        <begin position="1"/>
        <end position="381"/>
    </location>
</feature>
<feature type="region of interest" description="EPSP synthase">
    <location>
        <begin position="394"/>
        <end position="838"/>
    </location>
</feature>
<feature type="region of interest" description="Shikimate kinase">
    <location>
        <begin position="857"/>
        <end position="1048"/>
    </location>
</feature>
<feature type="region of interest" description="3-dehydroquinase">
    <location>
        <begin position="1049"/>
        <end position="1269"/>
    </location>
</feature>
<feature type="region of interest" description="Shikimate dehydrogenase">
    <location>
        <begin position="1282"/>
        <end position="1580"/>
    </location>
</feature>
<feature type="active site" description="Proton acceptor; for 3-dehydroquinate synthase activity" evidence="1">
    <location>
        <position position="257"/>
    </location>
</feature>
<feature type="active site" description="Proton acceptor; for 3-dehydroquinate synthase activity" evidence="1">
    <location>
        <position position="272"/>
    </location>
</feature>
<feature type="active site" description="For EPSP synthase activity" evidence="1">
    <location>
        <position position="820"/>
    </location>
</feature>
<feature type="active site" description="Proton acceptor; for 3-dehydroquinate dehydratase activity" evidence="1">
    <location>
        <position position="1172"/>
    </location>
</feature>
<feature type="active site" description="Schiff-base intermediate with substrate; for 3-dehydroquinate dehydratase activity" evidence="1">
    <location>
        <position position="1200"/>
    </location>
</feature>
<feature type="binding site" evidence="1">
    <location>
        <begin position="44"/>
        <end position="46"/>
    </location>
    <ligand>
        <name>NAD(+)</name>
        <dbReference type="ChEBI" id="CHEBI:57540"/>
    </ligand>
</feature>
<feature type="binding site" evidence="1">
    <location>
        <begin position="81"/>
        <end position="84"/>
    </location>
    <ligand>
        <name>NAD(+)</name>
        <dbReference type="ChEBI" id="CHEBI:57540"/>
    </ligand>
</feature>
<feature type="binding site" evidence="1">
    <location>
        <begin position="114"/>
        <end position="116"/>
    </location>
    <ligand>
        <name>NAD(+)</name>
        <dbReference type="ChEBI" id="CHEBI:57540"/>
    </ligand>
</feature>
<feature type="binding site" evidence="1">
    <location>
        <position position="119"/>
    </location>
    <ligand>
        <name>NAD(+)</name>
        <dbReference type="ChEBI" id="CHEBI:57540"/>
    </ligand>
</feature>
<feature type="binding site" evidence="1">
    <location>
        <position position="130"/>
    </location>
    <ligand>
        <name>7-phospho-2-dehydro-3-deoxy-D-arabino-heptonate</name>
        <dbReference type="ChEBI" id="CHEBI:58394"/>
    </ligand>
</feature>
<feature type="binding site" evidence="1">
    <location>
        <begin position="139"/>
        <end position="140"/>
    </location>
    <ligand>
        <name>NAD(+)</name>
        <dbReference type="ChEBI" id="CHEBI:57540"/>
    </ligand>
</feature>
<feature type="binding site" evidence="1">
    <location>
        <position position="146"/>
    </location>
    <ligand>
        <name>7-phospho-2-dehydro-3-deoxy-D-arabino-heptonate</name>
        <dbReference type="ChEBI" id="CHEBI:58394"/>
    </ligand>
</feature>
<feature type="binding site" evidence="1">
    <location>
        <position position="152"/>
    </location>
    <ligand>
        <name>7-phospho-2-dehydro-3-deoxy-D-arabino-heptonate</name>
        <dbReference type="ChEBI" id="CHEBI:58394"/>
    </ligand>
</feature>
<feature type="binding site" evidence="1">
    <location>
        <position position="161"/>
    </location>
    <ligand>
        <name>NAD(+)</name>
        <dbReference type="ChEBI" id="CHEBI:57540"/>
    </ligand>
</feature>
<feature type="binding site" evidence="1">
    <location>
        <position position="162"/>
    </location>
    <ligand>
        <name>7-phospho-2-dehydro-3-deoxy-D-arabino-heptonate</name>
        <dbReference type="ChEBI" id="CHEBI:58394"/>
    </ligand>
</feature>
<feature type="binding site" evidence="1">
    <location>
        <begin position="179"/>
        <end position="182"/>
    </location>
    <ligand>
        <name>NAD(+)</name>
        <dbReference type="ChEBI" id="CHEBI:57540"/>
    </ligand>
</feature>
<feature type="binding site" evidence="1">
    <location>
        <position position="190"/>
    </location>
    <ligand>
        <name>NAD(+)</name>
        <dbReference type="ChEBI" id="CHEBI:57540"/>
    </ligand>
</feature>
<feature type="binding site" evidence="1">
    <location>
        <position position="194"/>
    </location>
    <ligand>
        <name>Zn(2+)</name>
        <dbReference type="ChEBI" id="CHEBI:29105"/>
        <note>catalytic</note>
    </ligand>
</feature>
<feature type="binding site" evidence="1">
    <location>
        <position position="247"/>
    </location>
    <ligand>
        <name>7-phospho-2-dehydro-3-deoxy-D-arabino-heptonate</name>
        <dbReference type="ChEBI" id="CHEBI:58394"/>
    </ligand>
</feature>
<feature type="binding site" evidence="1">
    <location>
        <begin position="261"/>
        <end position="265"/>
    </location>
    <ligand>
        <name>7-phospho-2-dehydro-3-deoxy-D-arabino-heptonate</name>
        <dbReference type="ChEBI" id="CHEBI:58394"/>
    </ligand>
</feature>
<feature type="binding site" evidence="1">
    <location>
        <position position="268"/>
    </location>
    <ligand>
        <name>7-phospho-2-dehydro-3-deoxy-D-arabino-heptonate</name>
        <dbReference type="ChEBI" id="CHEBI:58394"/>
    </ligand>
</feature>
<feature type="binding site" evidence="1">
    <location>
        <position position="268"/>
    </location>
    <ligand>
        <name>Zn(2+)</name>
        <dbReference type="ChEBI" id="CHEBI:29105"/>
        <note>catalytic</note>
    </ligand>
</feature>
<feature type="binding site" evidence="1">
    <location>
        <position position="284"/>
    </location>
    <ligand>
        <name>7-phospho-2-dehydro-3-deoxy-D-arabino-heptonate</name>
        <dbReference type="ChEBI" id="CHEBI:58394"/>
    </ligand>
</feature>
<feature type="binding site" evidence="1">
    <location>
        <position position="284"/>
    </location>
    <ligand>
        <name>Zn(2+)</name>
        <dbReference type="ChEBI" id="CHEBI:29105"/>
        <note>catalytic</note>
    </ligand>
</feature>
<feature type="binding site" evidence="1">
    <location>
        <position position="353"/>
    </location>
    <ligand>
        <name>7-phospho-2-dehydro-3-deoxy-D-arabino-heptonate</name>
        <dbReference type="ChEBI" id="CHEBI:58394"/>
    </ligand>
</feature>
<feature type="binding site" evidence="1">
    <location>
        <begin position="863"/>
        <end position="870"/>
    </location>
    <ligand>
        <name>ATP</name>
        <dbReference type="ChEBI" id="CHEBI:30616"/>
    </ligand>
</feature>
<reference key="1">
    <citation type="journal article" date="2009" name="Genome Res.">
        <title>Comparative genomic analyses of the human fungal pathogens Coccidioides and their relatives.</title>
        <authorList>
            <person name="Sharpton T.J."/>
            <person name="Stajich J.E."/>
            <person name="Rounsley S.D."/>
            <person name="Gardner M.J."/>
            <person name="Wortman J.R."/>
            <person name="Jordar V.S."/>
            <person name="Maiti R."/>
            <person name="Kodira C.D."/>
            <person name="Neafsey D.E."/>
            <person name="Zeng Q."/>
            <person name="Hung C.-Y."/>
            <person name="McMahan C."/>
            <person name="Muszewska A."/>
            <person name="Grynberg M."/>
            <person name="Mandel M.A."/>
            <person name="Kellner E.M."/>
            <person name="Barker B.M."/>
            <person name="Galgiani J.N."/>
            <person name="Orbach M.J."/>
            <person name="Kirkland T.N."/>
            <person name="Cole G.T."/>
            <person name="Henn M.R."/>
            <person name="Birren B.W."/>
            <person name="Taylor J.W."/>
        </authorList>
    </citation>
    <scope>NUCLEOTIDE SEQUENCE [LARGE SCALE GENOMIC DNA]</scope>
    <source>
        <strain>UAMH 1704</strain>
    </source>
</reference>
<comment type="function">
    <text evidence="1">The AROM polypeptide catalyzes 5 consecutive enzymatic reactions in prechorismate polyaromatic amino acid biosynthesis.</text>
</comment>
<comment type="catalytic activity">
    <reaction evidence="1">
        <text>7-phospho-2-dehydro-3-deoxy-D-arabino-heptonate = 3-dehydroquinate + phosphate</text>
        <dbReference type="Rhea" id="RHEA:21968"/>
        <dbReference type="ChEBI" id="CHEBI:32364"/>
        <dbReference type="ChEBI" id="CHEBI:43474"/>
        <dbReference type="ChEBI" id="CHEBI:58394"/>
        <dbReference type="EC" id="4.2.3.4"/>
    </reaction>
</comment>
<comment type="catalytic activity">
    <reaction evidence="1">
        <text>3-dehydroquinate = 3-dehydroshikimate + H2O</text>
        <dbReference type="Rhea" id="RHEA:21096"/>
        <dbReference type="ChEBI" id="CHEBI:15377"/>
        <dbReference type="ChEBI" id="CHEBI:16630"/>
        <dbReference type="ChEBI" id="CHEBI:32364"/>
        <dbReference type="EC" id="4.2.1.10"/>
    </reaction>
</comment>
<comment type="catalytic activity">
    <reaction evidence="1">
        <text>shikimate + NADP(+) = 3-dehydroshikimate + NADPH + H(+)</text>
        <dbReference type="Rhea" id="RHEA:17737"/>
        <dbReference type="ChEBI" id="CHEBI:15378"/>
        <dbReference type="ChEBI" id="CHEBI:16630"/>
        <dbReference type="ChEBI" id="CHEBI:36208"/>
        <dbReference type="ChEBI" id="CHEBI:57783"/>
        <dbReference type="ChEBI" id="CHEBI:58349"/>
        <dbReference type="EC" id="1.1.1.25"/>
    </reaction>
</comment>
<comment type="catalytic activity">
    <reaction evidence="1">
        <text>shikimate + ATP = 3-phosphoshikimate + ADP + H(+)</text>
        <dbReference type="Rhea" id="RHEA:13121"/>
        <dbReference type="ChEBI" id="CHEBI:15378"/>
        <dbReference type="ChEBI" id="CHEBI:30616"/>
        <dbReference type="ChEBI" id="CHEBI:36208"/>
        <dbReference type="ChEBI" id="CHEBI:145989"/>
        <dbReference type="ChEBI" id="CHEBI:456216"/>
        <dbReference type="EC" id="2.7.1.71"/>
    </reaction>
</comment>
<comment type="catalytic activity">
    <reaction evidence="1">
        <text>3-phosphoshikimate + phosphoenolpyruvate = 5-O-(1-carboxyvinyl)-3-phosphoshikimate + phosphate</text>
        <dbReference type="Rhea" id="RHEA:21256"/>
        <dbReference type="ChEBI" id="CHEBI:43474"/>
        <dbReference type="ChEBI" id="CHEBI:57701"/>
        <dbReference type="ChEBI" id="CHEBI:58702"/>
        <dbReference type="ChEBI" id="CHEBI:145989"/>
        <dbReference type="EC" id="2.5.1.19"/>
    </reaction>
</comment>
<comment type="cofactor">
    <cofactor>
        <name>Zn(2+)</name>
        <dbReference type="ChEBI" id="CHEBI:29105"/>
    </cofactor>
    <text>Binds 2 Zn(2+) ions per subunit.</text>
</comment>
<comment type="pathway">
    <text evidence="1">Metabolic intermediate biosynthesis; chorismate biosynthesis; chorismate from D-erythrose 4-phosphate and phosphoenolpyruvate: step 2/7.</text>
</comment>
<comment type="pathway">
    <text evidence="1">Metabolic intermediate biosynthesis; chorismate biosynthesis; chorismate from D-erythrose 4-phosphate and phosphoenolpyruvate: step 3/7.</text>
</comment>
<comment type="pathway">
    <text evidence="1">Metabolic intermediate biosynthesis; chorismate biosynthesis; chorismate from D-erythrose 4-phosphate and phosphoenolpyruvate: step 4/7.</text>
</comment>
<comment type="pathway">
    <text evidence="1">Metabolic intermediate biosynthesis; chorismate biosynthesis; chorismate from D-erythrose 4-phosphate and phosphoenolpyruvate: step 5/7.</text>
</comment>
<comment type="pathway">
    <text evidence="1">Metabolic intermediate biosynthesis; chorismate biosynthesis; chorismate from D-erythrose 4-phosphate and phosphoenolpyruvate: step 6/7.</text>
</comment>
<comment type="subunit">
    <text evidence="1">Homodimer.</text>
</comment>
<comment type="subcellular location">
    <subcellularLocation>
        <location evidence="1">Cytoplasm</location>
    </subcellularLocation>
</comment>
<comment type="similarity">
    <text evidence="1">In the N-terminal section; belongs to the sugar phosphate cyclases superfamily. Dehydroquinate synthase family.</text>
</comment>
<comment type="similarity">
    <text evidence="1">In the 2nd section; belongs to the EPSP synthase family.</text>
</comment>
<comment type="similarity">
    <text evidence="1">In the 3rd section; belongs to the shikimate kinase family.</text>
</comment>
<comment type="similarity">
    <text evidence="1">In the 4th section; belongs to the type-I 3-dehydroquinase family.</text>
</comment>
<comment type="similarity">
    <text evidence="1">In the C-terminal section; belongs to the shikimate dehydrogenase family.</text>
</comment>
<accession>C4JYG6</accession>
<dbReference type="EC" id="4.2.3.4" evidence="1"/>
<dbReference type="EC" id="2.5.1.19" evidence="1"/>
<dbReference type="EC" id="2.7.1.71" evidence="1"/>
<dbReference type="EC" id="4.2.1.10" evidence="1"/>
<dbReference type="EC" id="1.1.1.25" evidence="1"/>
<dbReference type="EMBL" id="CH476619">
    <property type="protein sequence ID" value="EEP82352.1"/>
    <property type="molecule type" value="Genomic_DNA"/>
</dbReference>
<dbReference type="RefSeq" id="XP_002582444.1">
    <property type="nucleotide sequence ID" value="XM_002582398.1"/>
</dbReference>
<dbReference type="SMR" id="C4JYG6"/>
<dbReference type="FunCoup" id="C4JYG6">
    <property type="interactions" value="418"/>
</dbReference>
<dbReference type="STRING" id="336963.C4JYG6"/>
<dbReference type="GeneID" id="8439819"/>
<dbReference type="KEGG" id="ure:UREG_07217"/>
<dbReference type="VEuPathDB" id="FungiDB:UREG_07217"/>
<dbReference type="eggNOG" id="KOG0692">
    <property type="taxonomic scope" value="Eukaryota"/>
</dbReference>
<dbReference type="HOGENOM" id="CLU_001201_1_2_1"/>
<dbReference type="InParanoid" id="C4JYG6"/>
<dbReference type="OMA" id="SWANMSW"/>
<dbReference type="OrthoDB" id="197068at2759"/>
<dbReference type="UniPathway" id="UPA00053">
    <property type="reaction ID" value="UER00085"/>
</dbReference>
<dbReference type="UniPathway" id="UPA00053">
    <property type="reaction ID" value="UER00086"/>
</dbReference>
<dbReference type="UniPathway" id="UPA00053">
    <property type="reaction ID" value="UER00087"/>
</dbReference>
<dbReference type="UniPathway" id="UPA00053">
    <property type="reaction ID" value="UER00088"/>
</dbReference>
<dbReference type="UniPathway" id="UPA00053">
    <property type="reaction ID" value="UER00089"/>
</dbReference>
<dbReference type="Proteomes" id="UP000002058">
    <property type="component" value="Unassembled WGS sequence"/>
</dbReference>
<dbReference type="GO" id="GO:0005737">
    <property type="term" value="C:cytoplasm"/>
    <property type="evidence" value="ECO:0007669"/>
    <property type="project" value="UniProtKB-SubCell"/>
</dbReference>
<dbReference type="GO" id="GO:0003855">
    <property type="term" value="F:3-dehydroquinate dehydratase activity"/>
    <property type="evidence" value="ECO:0007669"/>
    <property type="project" value="UniProtKB-UniRule"/>
</dbReference>
<dbReference type="GO" id="GO:0003856">
    <property type="term" value="F:3-dehydroquinate synthase activity"/>
    <property type="evidence" value="ECO:0007669"/>
    <property type="project" value="UniProtKB-UniRule"/>
</dbReference>
<dbReference type="GO" id="GO:0003866">
    <property type="term" value="F:3-phosphoshikimate 1-carboxyvinyltransferase activity"/>
    <property type="evidence" value="ECO:0007669"/>
    <property type="project" value="UniProtKB-UniRule"/>
</dbReference>
<dbReference type="GO" id="GO:0005524">
    <property type="term" value="F:ATP binding"/>
    <property type="evidence" value="ECO:0007669"/>
    <property type="project" value="UniProtKB-UniRule"/>
</dbReference>
<dbReference type="GO" id="GO:0046872">
    <property type="term" value="F:metal ion binding"/>
    <property type="evidence" value="ECO:0007669"/>
    <property type="project" value="UniProtKB-UniRule"/>
</dbReference>
<dbReference type="GO" id="GO:0004764">
    <property type="term" value="F:shikimate 3-dehydrogenase (NADP+) activity"/>
    <property type="evidence" value="ECO:0007669"/>
    <property type="project" value="UniProtKB-UniRule"/>
</dbReference>
<dbReference type="GO" id="GO:0004765">
    <property type="term" value="F:shikimate kinase activity"/>
    <property type="evidence" value="ECO:0007669"/>
    <property type="project" value="UniProtKB-UniRule"/>
</dbReference>
<dbReference type="GO" id="GO:0008652">
    <property type="term" value="P:amino acid biosynthetic process"/>
    <property type="evidence" value="ECO:0007669"/>
    <property type="project" value="UniProtKB-KW"/>
</dbReference>
<dbReference type="GO" id="GO:0009073">
    <property type="term" value="P:aromatic amino acid family biosynthetic process"/>
    <property type="evidence" value="ECO:0007669"/>
    <property type="project" value="UniProtKB-UniRule"/>
</dbReference>
<dbReference type="GO" id="GO:0009423">
    <property type="term" value="P:chorismate biosynthetic process"/>
    <property type="evidence" value="ECO:0007669"/>
    <property type="project" value="UniProtKB-UniRule"/>
</dbReference>
<dbReference type="CDD" id="cd00502">
    <property type="entry name" value="DHQase_I"/>
    <property type="match status" value="1"/>
</dbReference>
<dbReference type="CDD" id="cd08195">
    <property type="entry name" value="DHQS"/>
    <property type="match status" value="1"/>
</dbReference>
<dbReference type="CDD" id="cd01556">
    <property type="entry name" value="EPSP_synthase"/>
    <property type="match status" value="1"/>
</dbReference>
<dbReference type="CDD" id="cd01065">
    <property type="entry name" value="NAD_bind_Shikimate_DH"/>
    <property type="match status" value="1"/>
</dbReference>
<dbReference type="CDD" id="cd00464">
    <property type="entry name" value="SK"/>
    <property type="match status" value="1"/>
</dbReference>
<dbReference type="FunFam" id="1.20.1090.10:FF:000007">
    <property type="entry name" value="Pentafunctional AROM polypeptide"/>
    <property type="match status" value="1"/>
</dbReference>
<dbReference type="FunFam" id="3.20.20.70:FF:000135">
    <property type="entry name" value="Pentafunctional AROM polypeptide"/>
    <property type="match status" value="1"/>
</dbReference>
<dbReference type="FunFam" id="3.40.50.1970:FF:000007">
    <property type="entry name" value="Pentafunctional AROM polypeptide"/>
    <property type="match status" value="1"/>
</dbReference>
<dbReference type="FunFam" id="3.40.50.300:FF:001256">
    <property type="entry name" value="Pentafunctional AROM polypeptide"/>
    <property type="match status" value="1"/>
</dbReference>
<dbReference type="FunFam" id="3.65.10.10:FF:000007">
    <property type="entry name" value="Pentafunctional AROM polypeptide"/>
    <property type="match status" value="1"/>
</dbReference>
<dbReference type="FunFam" id="3.65.10.10:FF:000008">
    <property type="entry name" value="Pentafunctional AROM polypeptide"/>
    <property type="match status" value="1"/>
</dbReference>
<dbReference type="Gene3D" id="3.40.50.1970">
    <property type="match status" value="1"/>
</dbReference>
<dbReference type="Gene3D" id="3.20.20.70">
    <property type="entry name" value="Aldolase class I"/>
    <property type="match status" value="1"/>
</dbReference>
<dbReference type="Gene3D" id="1.20.1090.10">
    <property type="entry name" value="Dehydroquinate synthase-like - alpha domain"/>
    <property type="match status" value="1"/>
</dbReference>
<dbReference type="Gene3D" id="3.65.10.10">
    <property type="entry name" value="Enolpyruvate transferase domain"/>
    <property type="match status" value="2"/>
</dbReference>
<dbReference type="Gene3D" id="3.40.50.10860">
    <property type="entry name" value="Leucine Dehydrogenase, chain A, domain 1"/>
    <property type="match status" value="1"/>
</dbReference>
<dbReference type="Gene3D" id="3.40.50.720">
    <property type="entry name" value="NAD(P)-binding Rossmann-like Domain"/>
    <property type="match status" value="1"/>
</dbReference>
<dbReference type="Gene3D" id="3.40.50.300">
    <property type="entry name" value="P-loop containing nucleotide triphosphate hydrolases"/>
    <property type="match status" value="1"/>
</dbReference>
<dbReference type="HAMAP" id="MF_00210">
    <property type="entry name" value="EPSP_synth"/>
    <property type="match status" value="1"/>
</dbReference>
<dbReference type="HAMAP" id="MF_03143">
    <property type="entry name" value="Pentafunct_AroM"/>
    <property type="match status" value="1"/>
</dbReference>
<dbReference type="HAMAP" id="MF_00109">
    <property type="entry name" value="Shikimate_kinase"/>
    <property type="match status" value="1"/>
</dbReference>
<dbReference type="InterPro" id="IPR018508">
    <property type="entry name" value="3-dehydroquinate_DH_AS"/>
</dbReference>
<dbReference type="InterPro" id="IPR013785">
    <property type="entry name" value="Aldolase_TIM"/>
</dbReference>
<dbReference type="InterPro" id="IPR046346">
    <property type="entry name" value="Aminoacid_DH-like_N_sf"/>
</dbReference>
<dbReference type="InterPro" id="IPR016037">
    <property type="entry name" value="DHQ_synth_AroB"/>
</dbReference>
<dbReference type="InterPro" id="IPR030960">
    <property type="entry name" value="DHQS/DOIS_N"/>
</dbReference>
<dbReference type="InterPro" id="IPR056179">
    <property type="entry name" value="DHQS_C"/>
</dbReference>
<dbReference type="InterPro" id="IPR001381">
    <property type="entry name" value="DHquinase_I"/>
</dbReference>
<dbReference type="InterPro" id="IPR001986">
    <property type="entry name" value="Enolpyruvate_Tfrase_dom"/>
</dbReference>
<dbReference type="InterPro" id="IPR036968">
    <property type="entry name" value="Enolpyruvate_Tfrase_sf"/>
</dbReference>
<dbReference type="InterPro" id="IPR006264">
    <property type="entry name" value="EPSP_synthase"/>
</dbReference>
<dbReference type="InterPro" id="IPR023193">
    <property type="entry name" value="EPSP_synthase_CS"/>
</dbReference>
<dbReference type="InterPro" id="IPR036291">
    <property type="entry name" value="NAD(P)-bd_dom_sf"/>
</dbReference>
<dbReference type="InterPro" id="IPR027417">
    <property type="entry name" value="P-loop_NTPase"/>
</dbReference>
<dbReference type="InterPro" id="IPR008289">
    <property type="entry name" value="Pentafunct_AroM"/>
</dbReference>
<dbReference type="InterPro" id="IPR013792">
    <property type="entry name" value="RNA3'P_cycl/enolpyr_Trfase_a/b"/>
</dbReference>
<dbReference type="InterPro" id="IPR041121">
    <property type="entry name" value="SDH_C"/>
</dbReference>
<dbReference type="InterPro" id="IPR031322">
    <property type="entry name" value="Shikimate/glucono_kinase"/>
</dbReference>
<dbReference type="InterPro" id="IPR013708">
    <property type="entry name" value="Shikimate_DH-bd_N"/>
</dbReference>
<dbReference type="InterPro" id="IPR010110">
    <property type="entry name" value="Shikimate_DH_AroM-type"/>
</dbReference>
<dbReference type="InterPro" id="IPR000623">
    <property type="entry name" value="Shikimate_kinase/TSH1"/>
</dbReference>
<dbReference type="InterPro" id="IPR023000">
    <property type="entry name" value="Shikimate_kinase_CS"/>
</dbReference>
<dbReference type="NCBIfam" id="TIGR01356">
    <property type="entry name" value="aroA"/>
    <property type="match status" value="1"/>
</dbReference>
<dbReference type="NCBIfam" id="TIGR01357">
    <property type="entry name" value="aroB"/>
    <property type="match status" value="1"/>
</dbReference>
<dbReference type="NCBIfam" id="TIGR01093">
    <property type="entry name" value="aroD"/>
    <property type="match status" value="1"/>
</dbReference>
<dbReference type="NCBIfam" id="TIGR01809">
    <property type="entry name" value="Shik-DH-AROM"/>
    <property type="match status" value="1"/>
</dbReference>
<dbReference type="PANTHER" id="PTHR21090">
    <property type="entry name" value="AROM/DEHYDROQUINATE SYNTHASE"/>
    <property type="match status" value="1"/>
</dbReference>
<dbReference type="PANTHER" id="PTHR21090:SF5">
    <property type="entry name" value="PENTAFUNCTIONAL AROM POLYPEPTIDE"/>
    <property type="match status" value="1"/>
</dbReference>
<dbReference type="Pfam" id="PF01761">
    <property type="entry name" value="DHQ_synthase"/>
    <property type="match status" value="1"/>
</dbReference>
<dbReference type="Pfam" id="PF24621">
    <property type="entry name" value="DHQS_C"/>
    <property type="match status" value="1"/>
</dbReference>
<dbReference type="Pfam" id="PF01487">
    <property type="entry name" value="DHquinase_I"/>
    <property type="match status" value="1"/>
</dbReference>
<dbReference type="Pfam" id="PF00275">
    <property type="entry name" value="EPSP_synthase"/>
    <property type="match status" value="1"/>
</dbReference>
<dbReference type="Pfam" id="PF18317">
    <property type="entry name" value="SDH_C"/>
    <property type="match status" value="1"/>
</dbReference>
<dbReference type="Pfam" id="PF08501">
    <property type="entry name" value="Shikimate_dh_N"/>
    <property type="match status" value="1"/>
</dbReference>
<dbReference type="Pfam" id="PF01202">
    <property type="entry name" value="SKI"/>
    <property type="match status" value="1"/>
</dbReference>
<dbReference type="PIRSF" id="PIRSF000514">
    <property type="entry name" value="Pentafunct_AroM"/>
    <property type="match status" value="1"/>
</dbReference>
<dbReference type="PRINTS" id="PR01100">
    <property type="entry name" value="SHIKIMTKNASE"/>
</dbReference>
<dbReference type="SUPFAM" id="SSF51569">
    <property type="entry name" value="Aldolase"/>
    <property type="match status" value="1"/>
</dbReference>
<dbReference type="SUPFAM" id="SSF53223">
    <property type="entry name" value="Aminoacid dehydrogenase-like, N-terminal domain"/>
    <property type="match status" value="1"/>
</dbReference>
<dbReference type="SUPFAM" id="SSF56796">
    <property type="entry name" value="Dehydroquinate synthase-like"/>
    <property type="match status" value="1"/>
</dbReference>
<dbReference type="SUPFAM" id="SSF55205">
    <property type="entry name" value="EPT/RTPC-like"/>
    <property type="match status" value="1"/>
</dbReference>
<dbReference type="SUPFAM" id="SSF51735">
    <property type="entry name" value="NAD(P)-binding Rossmann-fold domains"/>
    <property type="match status" value="1"/>
</dbReference>
<dbReference type="SUPFAM" id="SSF52540">
    <property type="entry name" value="P-loop containing nucleoside triphosphate hydrolases"/>
    <property type="match status" value="1"/>
</dbReference>
<dbReference type="PROSITE" id="PS01028">
    <property type="entry name" value="DEHYDROQUINASE_I"/>
    <property type="match status" value="1"/>
</dbReference>
<dbReference type="PROSITE" id="PS00104">
    <property type="entry name" value="EPSP_SYNTHASE_1"/>
    <property type="match status" value="1"/>
</dbReference>
<dbReference type="PROSITE" id="PS00885">
    <property type="entry name" value="EPSP_SYNTHASE_2"/>
    <property type="match status" value="1"/>
</dbReference>
<dbReference type="PROSITE" id="PS01128">
    <property type="entry name" value="SHIKIMATE_KINASE"/>
    <property type="match status" value="1"/>
</dbReference>
<protein>
    <recommendedName>
        <fullName evidence="1">Pentafunctional AROM polypeptide</fullName>
    </recommendedName>
    <domain>
        <recommendedName>
            <fullName evidence="1">3-dehydroquinate synthase</fullName>
            <shortName evidence="1">DHQS</shortName>
            <ecNumber evidence="1">4.2.3.4</ecNumber>
        </recommendedName>
    </domain>
    <domain>
        <recommendedName>
            <fullName evidence="1">3-phosphoshikimate 1-carboxyvinyltransferase</fullName>
            <ecNumber evidence="1">2.5.1.19</ecNumber>
        </recommendedName>
        <alternativeName>
            <fullName evidence="1">5-enolpyruvylshikimate-3-phosphate synthase</fullName>
            <shortName evidence="1">EPSP synthase</shortName>
            <shortName evidence="1">EPSPS</shortName>
        </alternativeName>
    </domain>
    <domain>
        <recommendedName>
            <fullName evidence="1">Shikimate kinase</fullName>
            <shortName evidence="1">SK</shortName>
            <ecNumber evidence="1">2.7.1.71</ecNumber>
        </recommendedName>
    </domain>
    <domain>
        <recommendedName>
            <fullName evidence="1">3-dehydroquinate dehydratase</fullName>
            <shortName evidence="1">3-dehydroquinase</shortName>
            <ecNumber evidence="1">4.2.1.10</ecNumber>
        </recommendedName>
    </domain>
    <domain>
        <recommendedName>
            <fullName evidence="1">Shikimate dehydrogenase</fullName>
            <ecNumber evidence="1">1.1.1.25</ecNumber>
        </recommendedName>
    </domain>
</protein>
<name>ARO1_UNCRE</name>
<keyword id="KW-0028">Amino-acid biosynthesis</keyword>
<keyword id="KW-0057">Aromatic amino acid biosynthesis</keyword>
<keyword id="KW-0067">ATP-binding</keyword>
<keyword id="KW-0963">Cytoplasm</keyword>
<keyword id="KW-0418">Kinase</keyword>
<keyword id="KW-0456">Lyase</keyword>
<keyword id="KW-0479">Metal-binding</keyword>
<keyword id="KW-0511">Multifunctional enzyme</keyword>
<keyword id="KW-0521">NADP</keyword>
<keyword id="KW-0547">Nucleotide-binding</keyword>
<keyword id="KW-0560">Oxidoreductase</keyword>
<keyword id="KW-1185">Reference proteome</keyword>
<keyword id="KW-0808">Transferase</keyword>
<keyword id="KW-0862">Zinc</keyword>
<sequence length="1580" mass="171167">MATPTVIKILGRDSIVADPGIWKRHVAQDLLTNCPSSTYILISDTTLTPLYVPSFQQAFEAAASSVTPKPRLLTYAIPPGEVSKSRQTKAEIEDWMLSRQPPCGRDTVIIALGGGVIGDLIGYVSATYMRGVRFVQVPTTLLAMVDSSIGGKTAIDTTHGKNLIGAIWQPEKIYLDMEFLNTLPEREFINGMAETAAISSEEDFAALERNADAILAAVKSENTTERPRFSGIQEILKLTILASARFKADVVSKDEREGGLRNLLNFGHSIGHAIEGILAPQILHGECVAIGMVKEAELARHLGILKSVAVSRLVKCLASYGLPTSLKDSRVRRLSAGKHCSVEQLLAFMAVDKKNAGPMKKVVLLSSIGSTHEQKASVVSNKDIKIVLAPSIEVSPGVPHALEITCVPPGSKSISNRALVLAALGSGTCRIKNLLHSDDTEVMLSALERLGAATFSWEEEGEVLVVHGKGGRLQASPDALYLGNAGTASRFLTTVATLANKSTVDSTILTGNARMKQRPIGALVDSLRTNGAGIKYMETTGCLPLKIDASGGFAGGHISLAAKVSSQYVSSLLMCAPYAKEPVTLKLVGGKPISQPYIDMTTAMMRSFGIDVKKSTSEEHTYHIPQGRYMNPTEYIIESDASSATYPLAVAAITGTTCTIPNIGSKSLQGDARFAVDVLRPMGCEVNQSSFSTTVTGPRNGALNALPNVDMEPMTDAFLTASVLAAVATAGSTSTTRIFGIANQRVKECNRIKAMKDELAKFGVTCREHEDGLEIDGIDRSALLRLPHGVYCYDDHRVAMSFSVLSLAASHPTLILEKECVGKTWPAWWDTLAQLFKANLEGVELKSEKKKAEKPAASLFIIGMRGAGKTTSGLWASKVLKRPFIDLDVELESKLGKSIPEIIKEQGWEGFRANELALLRQVLSEKPTGYVFACGGGIVETEEARDLLTQYQKAHGNVLLVMRDINAVMDFLKIDKTRPAYVEDMMGVWLRRKPWFQQCSNIQYYSQQSDPSKMGSALESFSRFLRVVTGEVDHLALMKKKPQSFFVSLTLPDLRPSVDILNDITLGSDAVELRVDLLVDPSSSSEMPSVDYVAEQISILRSRVSVPLVFTIRTKSQGGRFPDDAHNAALDLYRLAIRMGSEFVDLEVTFPEYVLRAVTEMKGVSKIIASHHDVANRLSWRNGSWTQFYNKALQYGDIIKLVGIASQLDDNIALREFKIWAKKAHDIPVIAINMGERGRLSRILNGFMTPVSHPKLPFKAAPGQLSAKEIREGLSLMGEIESKKFAIVGKPISASRSPALHNALFADVGLPHVYGRLETDDVQNVKDLIHAPDFGGASITIPLKLDIMPLLDEIAPEAKVIGAVNTIVPAPREPGDVKKGPRLIGYNTDWQGMVQCLRHGGAVSPSTSNDPAPGLVIGGGGTARAAIHALHSMGYSPIYLVGRSESKLNDMALSFPATYNLQILKDAESLEILPSVAIGTIPGDQPIDPSMREVLCRLFEMAARIDAELKELAPKRVLLEMAYKPTVTPLSQLASDCGWATIPGLEALVGQGVYQFQLWTGITPVFRDARAAVMNADADI</sequence>
<evidence type="ECO:0000255" key="1">
    <source>
        <dbReference type="HAMAP-Rule" id="MF_03143"/>
    </source>
</evidence>
<organism>
    <name type="scientific">Uncinocarpus reesii (strain UAMH 1704)</name>
    <dbReference type="NCBI Taxonomy" id="336963"/>
    <lineage>
        <taxon>Eukaryota</taxon>
        <taxon>Fungi</taxon>
        <taxon>Dikarya</taxon>
        <taxon>Ascomycota</taxon>
        <taxon>Pezizomycotina</taxon>
        <taxon>Eurotiomycetes</taxon>
        <taxon>Eurotiomycetidae</taxon>
        <taxon>Onygenales</taxon>
        <taxon>Onygenaceae</taxon>
        <taxon>Uncinocarpus</taxon>
    </lineage>
</organism>